<name>KPYK_BORBU</name>
<feature type="chain" id="PRO_0000112057" description="Pyruvate kinase">
    <location>
        <begin position="1"/>
        <end position="477"/>
    </location>
</feature>
<feature type="binding site" evidence="1">
    <location>
        <position position="34"/>
    </location>
    <ligand>
        <name>substrate</name>
    </ligand>
</feature>
<feature type="binding site" evidence="2">
    <location>
        <begin position="36"/>
        <end position="39"/>
    </location>
    <ligand>
        <name>ATP</name>
        <dbReference type="ChEBI" id="CHEBI:30616"/>
    </ligand>
</feature>
<feature type="binding site" evidence="1">
    <location>
        <position position="36"/>
    </location>
    <ligand>
        <name>K(+)</name>
        <dbReference type="ChEBI" id="CHEBI:29103"/>
    </ligand>
</feature>
<feature type="binding site" evidence="1">
    <location>
        <position position="64"/>
    </location>
    <ligand>
        <name>K(+)</name>
        <dbReference type="ChEBI" id="CHEBI:29103"/>
    </ligand>
</feature>
<feature type="binding site" evidence="1">
    <location>
        <position position="65"/>
    </location>
    <ligand>
        <name>K(+)</name>
        <dbReference type="ChEBI" id="CHEBI:29103"/>
    </ligand>
</feature>
<feature type="binding site" evidence="2">
    <location>
        <position position="71"/>
    </location>
    <ligand>
        <name>ATP</name>
        <dbReference type="ChEBI" id="CHEBI:30616"/>
    </ligand>
</feature>
<feature type="binding site" evidence="2">
    <location>
        <position position="150"/>
    </location>
    <ligand>
        <name>ATP</name>
        <dbReference type="ChEBI" id="CHEBI:30616"/>
    </ligand>
</feature>
<feature type="binding site" evidence="1">
    <location>
        <position position="216"/>
    </location>
    <ligand>
        <name>Mg(2+)</name>
        <dbReference type="ChEBI" id="CHEBI:18420"/>
    </ligand>
</feature>
<feature type="binding site" evidence="1">
    <location>
        <position position="239"/>
    </location>
    <ligand>
        <name>substrate</name>
    </ligand>
</feature>
<feature type="binding site" evidence="1">
    <location>
        <position position="240"/>
    </location>
    <ligand>
        <name>Mg(2+)</name>
        <dbReference type="ChEBI" id="CHEBI:18420"/>
    </ligand>
</feature>
<feature type="binding site" evidence="1">
    <location>
        <position position="240"/>
    </location>
    <ligand>
        <name>substrate</name>
    </ligand>
</feature>
<feature type="binding site" evidence="1">
    <location>
        <position position="272"/>
    </location>
    <ligand>
        <name>substrate</name>
    </ligand>
</feature>
<feature type="site" description="Transition state stabilizer" evidence="1">
    <location>
        <position position="214"/>
    </location>
</feature>
<evidence type="ECO:0000250" key="1"/>
<evidence type="ECO:0000250" key="2">
    <source>
        <dbReference type="UniProtKB" id="P14618"/>
    </source>
</evidence>
<evidence type="ECO:0000305" key="3"/>
<dbReference type="EC" id="2.7.1.40"/>
<dbReference type="EMBL" id="AE000783">
    <property type="protein sequence ID" value="AAC66733.1"/>
    <property type="molecule type" value="Genomic_DNA"/>
</dbReference>
<dbReference type="PIR" id="C70143">
    <property type="entry name" value="C70143"/>
</dbReference>
<dbReference type="RefSeq" id="NP_212482.1">
    <property type="nucleotide sequence ID" value="NC_001318.1"/>
</dbReference>
<dbReference type="RefSeq" id="WP_002661716.1">
    <property type="nucleotide sequence ID" value="NC_001318.1"/>
</dbReference>
<dbReference type="SMR" id="O51323"/>
<dbReference type="STRING" id="224326.BB_0348"/>
<dbReference type="PaxDb" id="224326-BB_0348"/>
<dbReference type="EnsemblBacteria" id="AAC66733">
    <property type="protein sequence ID" value="AAC66733"/>
    <property type="gene ID" value="BB_0348"/>
</dbReference>
<dbReference type="KEGG" id="bbu:BB_0348"/>
<dbReference type="PATRIC" id="fig|224326.49.peg.744"/>
<dbReference type="HOGENOM" id="CLU_015439_0_2_12"/>
<dbReference type="OrthoDB" id="9812123at2"/>
<dbReference type="UniPathway" id="UPA00109">
    <property type="reaction ID" value="UER00188"/>
</dbReference>
<dbReference type="Proteomes" id="UP000001807">
    <property type="component" value="Chromosome"/>
</dbReference>
<dbReference type="GO" id="GO:0005829">
    <property type="term" value="C:cytosol"/>
    <property type="evidence" value="ECO:0000314"/>
    <property type="project" value="CAFA"/>
</dbReference>
<dbReference type="GO" id="GO:0005524">
    <property type="term" value="F:ATP binding"/>
    <property type="evidence" value="ECO:0007669"/>
    <property type="project" value="UniProtKB-KW"/>
</dbReference>
<dbReference type="GO" id="GO:0016301">
    <property type="term" value="F:kinase activity"/>
    <property type="evidence" value="ECO:0007669"/>
    <property type="project" value="UniProtKB-KW"/>
</dbReference>
<dbReference type="GO" id="GO:0000287">
    <property type="term" value="F:magnesium ion binding"/>
    <property type="evidence" value="ECO:0007669"/>
    <property type="project" value="InterPro"/>
</dbReference>
<dbReference type="GO" id="GO:0030955">
    <property type="term" value="F:potassium ion binding"/>
    <property type="evidence" value="ECO:0007669"/>
    <property type="project" value="InterPro"/>
</dbReference>
<dbReference type="GO" id="GO:0004743">
    <property type="term" value="F:pyruvate kinase activity"/>
    <property type="evidence" value="ECO:0007669"/>
    <property type="project" value="UniProtKB-EC"/>
</dbReference>
<dbReference type="FunFam" id="2.40.33.10:FF:000001">
    <property type="entry name" value="Pyruvate kinase"/>
    <property type="match status" value="1"/>
</dbReference>
<dbReference type="FunFam" id="3.20.20.60:FF:000025">
    <property type="entry name" value="Pyruvate kinase"/>
    <property type="match status" value="1"/>
</dbReference>
<dbReference type="Gene3D" id="3.20.20.60">
    <property type="entry name" value="Phosphoenolpyruvate-binding domains"/>
    <property type="match status" value="1"/>
</dbReference>
<dbReference type="Gene3D" id="2.40.33.10">
    <property type="entry name" value="PK beta-barrel domain-like"/>
    <property type="match status" value="1"/>
</dbReference>
<dbReference type="Gene3D" id="3.40.1380.20">
    <property type="entry name" value="Pyruvate kinase, C-terminal domain"/>
    <property type="match status" value="1"/>
</dbReference>
<dbReference type="InterPro" id="IPR001697">
    <property type="entry name" value="Pyr_Knase"/>
</dbReference>
<dbReference type="InterPro" id="IPR015813">
    <property type="entry name" value="Pyrv/PenolPyrv_kinase-like_dom"/>
</dbReference>
<dbReference type="InterPro" id="IPR040442">
    <property type="entry name" value="Pyrv_kinase-like_dom_sf"/>
</dbReference>
<dbReference type="InterPro" id="IPR011037">
    <property type="entry name" value="Pyrv_Knase-like_insert_dom_sf"/>
</dbReference>
<dbReference type="InterPro" id="IPR018209">
    <property type="entry name" value="Pyrv_Knase_AS"/>
</dbReference>
<dbReference type="InterPro" id="IPR015793">
    <property type="entry name" value="Pyrv_Knase_brl"/>
</dbReference>
<dbReference type="InterPro" id="IPR015795">
    <property type="entry name" value="Pyrv_Knase_C"/>
</dbReference>
<dbReference type="InterPro" id="IPR036918">
    <property type="entry name" value="Pyrv_Knase_C_sf"/>
</dbReference>
<dbReference type="InterPro" id="IPR015806">
    <property type="entry name" value="Pyrv_Knase_insert_dom_sf"/>
</dbReference>
<dbReference type="NCBIfam" id="NF004491">
    <property type="entry name" value="PRK05826.1"/>
    <property type="match status" value="1"/>
</dbReference>
<dbReference type="NCBIfam" id="NF004978">
    <property type="entry name" value="PRK06354.1"/>
    <property type="match status" value="1"/>
</dbReference>
<dbReference type="NCBIfam" id="TIGR01064">
    <property type="entry name" value="pyruv_kin"/>
    <property type="match status" value="1"/>
</dbReference>
<dbReference type="PANTHER" id="PTHR11817">
    <property type="entry name" value="PYRUVATE KINASE"/>
    <property type="match status" value="1"/>
</dbReference>
<dbReference type="Pfam" id="PF00224">
    <property type="entry name" value="PK"/>
    <property type="match status" value="1"/>
</dbReference>
<dbReference type="Pfam" id="PF02887">
    <property type="entry name" value="PK_C"/>
    <property type="match status" value="1"/>
</dbReference>
<dbReference type="PRINTS" id="PR01050">
    <property type="entry name" value="PYRUVTKNASE"/>
</dbReference>
<dbReference type="SUPFAM" id="SSF51621">
    <property type="entry name" value="Phosphoenolpyruvate/pyruvate domain"/>
    <property type="match status" value="1"/>
</dbReference>
<dbReference type="SUPFAM" id="SSF50800">
    <property type="entry name" value="PK beta-barrel domain-like"/>
    <property type="match status" value="1"/>
</dbReference>
<dbReference type="SUPFAM" id="SSF52935">
    <property type="entry name" value="PK C-terminal domain-like"/>
    <property type="match status" value="1"/>
</dbReference>
<dbReference type="PROSITE" id="PS00110">
    <property type="entry name" value="PYRUVATE_KINASE"/>
    <property type="match status" value="1"/>
</dbReference>
<proteinExistence type="inferred from homology"/>
<accession>O51323</accession>
<reference key="1">
    <citation type="journal article" date="1997" name="Nature">
        <title>Genomic sequence of a Lyme disease spirochaete, Borrelia burgdorferi.</title>
        <authorList>
            <person name="Fraser C.M."/>
            <person name="Casjens S."/>
            <person name="Huang W.M."/>
            <person name="Sutton G.G."/>
            <person name="Clayton R.A."/>
            <person name="Lathigra R."/>
            <person name="White O."/>
            <person name="Ketchum K.A."/>
            <person name="Dodson R.J."/>
            <person name="Hickey E.K."/>
            <person name="Gwinn M.L."/>
            <person name="Dougherty B.A."/>
            <person name="Tomb J.-F."/>
            <person name="Fleischmann R.D."/>
            <person name="Richardson D.L."/>
            <person name="Peterson J.D."/>
            <person name="Kerlavage A.R."/>
            <person name="Quackenbush J."/>
            <person name="Salzberg S.L."/>
            <person name="Hanson M."/>
            <person name="van Vugt R."/>
            <person name="Palmer N."/>
            <person name="Adams M.D."/>
            <person name="Gocayne J.D."/>
            <person name="Weidman J.F."/>
            <person name="Utterback T.R."/>
            <person name="Watthey L."/>
            <person name="McDonald L.A."/>
            <person name="Artiach P."/>
            <person name="Bowman C."/>
            <person name="Garland S.A."/>
            <person name="Fujii C."/>
            <person name="Cotton M.D."/>
            <person name="Horst K."/>
            <person name="Roberts K.M."/>
            <person name="Hatch B."/>
            <person name="Smith H.O."/>
            <person name="Venter J.C."/>
        </authorList>
    </citation>
    <scope>NUCLEOTIDE SEQUENCE [LARGE SCALE GENOMIC DNA]</scope>
    <source>
        <strain>ATCC 35210 / DSM 4680 / CIP 102532 / B31</strain>
    </source>
</reference>
<organism>
    <name type="scientific">Borreliella burgdorferi (strain ATCC 35210 / DSM 4680 / CIP 102532 / B31)</name>
    <name type="common">Borrelia burgdorferi</name>
    <dbReference type="NCBI Taxonomy" id="224326"/>
    <lineage>
        <taxon>Bacteria</taxon>
        <taxon>Pseudomonadati</taxon>
        <taxon>Spirochaetota</taxon>
        <taxon>Spirochaetia</taxon>
        <taxon>Spirochaetales</taxon>
        <taxon>Borreliaceae</taxon>
        <taxon>Borreliella</taxon>
    </lineage>
</organism>
<gene>
    <name type="primary">pyk</name>
    <name type="ordered locus">BB_0348</name>
</gene>
<keyword id="KW-0067">ATP-binding</keyword>
<keyword id="KW-0324">Glycolysis</keyword>
<keyword id="KW-0418">Kinase</keyword>
<keyword id="KW-0460">Magnesium</keyword>
<keyword id="KW-0479">Metal-binding</keyword>
<keyword id="KW-0547">Nucleotide-binding</keyword>
<keyword id="KW-0630">Potassium</keyword>
<keyword id="KW-0670">Pyruvate</keyword>
<keyword id="KW-1185">Reference proteome</keyword>
<keyword id="KW-0808">Transferase</keyword>
<protein>
    <recommendedName>
        <fullName>Pyruvate kinase</fullName>
        <shortName>PK</shortName>
        <ecNumber>2.7.1.40</ecNumber>
    </recommendedName>
</protein>
<comment type="catalytic activity">
    <reaction>
        <text>pyruvate + ATP = phosphoenolpyruvate + ADP + H(+)</text>
        <dbReference type="Rhea" id="RHEA:18157"/>
        <dbReference type="ChEBI" id="CHEBI:15361"/>
        <dbReference type="ChEBI" id="CHEBI:15378"/>
        <dbReference type="ChEBI" id="CHEBI:30616"/>
        <dbReference type="ChEBI" id="CHEBI:58702"/>
        <dbReference type="ChEBI" id="CHEBI:456216"/>
        <dbReference type="EC" id="2.7.1.40"/>
    </reaction>
</comment>
<comment type="cofactor">
    <cofactor>
        <name>Mg(2+)</name>
        <dbReference type="ChEBI" id="CHEBI:18420"/>
    </cofactor>
</comment>
<comment type="cofactor">
    <cofactor>
        <name>K(+)</name>
        <dbReference type="ChEBI" id="CHEBI:29103"/>
    </cofactor>
</comment>
<comment type="pathway">
    <text>Carbohydrate degradation; glycolysis; pyruvate from D-glyceraldehyde 3-phosphate: step 5/5.</text>
</comment>
<comment type="subunit">
    <text evidence="1">Homotetramer.</text>
</comment>
<comment type="similarity">
    <text evidence="3">Belongs to the pyruvate kinase family.</text>
</comment>
<sequence>MISKLTKIVATISDLRCEPEHIKDLHDAGVNVIRLNTAHQSHEDTIKVIDNVRKISNKIALMIDTKGPEVRTANIENPIIVKTGDKVIISTSPINEPNNFQTNYDGFVKEVPQGSKVLIDDGELEMTVVAKLPDRLICEIKNDGQIKNKKSINTPGISLKLQSVTEKDKGFIELAAKYNVDFIAHSFVRHSKDVQDVQEILTASGNPDVKIISKIENQEGIDNIEEIAKASYGIMVARGDMGVEIPAEDVPIAQLKITQTCIKYGIPVITATQMLHTMIENPRPTRAEVSDIANAILNGTDAIMLSGETAYGKYPIEAVKMMTSIAKKVEKHRKMTLYKDELFYDKSITRNYIIKCAIDATKLMDIKAIIVDSLKGKTARIMATYRASVPLFITTNSERLARELALSYGVYSNLVDNNFKRTTEFVVTSLKMLKEQGVVNDKDTVIIISGNPNRNIEKGTEFMEINTVEDAIKGRNI</sequence>